<proteinExistence type="evidence at protein level"/>
<feature type="chain" id="PRO_0000103154" description="4-hydroxy-tetrahydrodipicolinate synthase">
    <location>
        <begin position="1"/>
        <end position="295"/>
    </location>
</feature>
<feature type="active site" description="Proton donor/acceptor" evidence="4">
    <location>
        <position position="135"/>
    </location>
</feature>
<feature type="active site" description="Schiff-base intermediate with substrate" evidence="1 2">
    <location>
        <position position="163"/>
    </location>
</feature>
<feature type="binding site" evidence="1 2">
    <location>
        <position position="47"/>
    </location>
    <ligand>
        <name>pyruvate</name>
        <dbReference type="ChEBI" id="CHEBI:15361"/>
    </ligand>
</feature>
<feature type="binding site" evidence="1">
    <location>
        <position position="206"/>
    </location>
    <ligand>
        <name>pyruvate</name>
        <dbReference type="ChEBI" id="CHEBI:15361"/>
    </ligand>
</feature>
<feature type="site" description="Part of a proton relay during catalysis" evidence="3">
    <location>
        <position position="46"/>
    </location>
</feature>
<feature type="site" description="Part of a proton relay during catalysis" evidence="3">
    <location>
        <position position="109"/>
    </location>
</feature>
<feature type="strand" evidence="5">
    <location>
        <begin position="6"/>
        <end position="11"/>
    </location>
</feature>
<feature type="helix" evidence="5">
    <location>
        <begin position="23"/>
        <end position="35"/>
    </location>
</feature>
<feature type="strand" evidence="5">
    <location>
        <begin position="39"/>
        <end position="45"/>
    </location>
</feature>
<feature type="turn" evidence="5">
    <location>
        <begin position="46"/>
        <end position="49"/>
    </location>
</feature>
<feature type="helix" evidence="5">
    <location>
        <begin position="50"/>
        <end position="52"/>
    </location>
</feature>
<feature type="helix" evidence="5">
    <location>
        <begin position="55"/>
        <end position="69"/>
    </location>
</feature>
<feature type="strand" evidence="5">
    <location>
        <begin position="75"/>
        <end position="78"/>
    </location>
</feature>
<feature type="helix" evidence="5">
    <location>
        <begin position="84"/>
        <end position="97"/>
    </location>
</feature>
<feature type="strand" evidence="5">
    <location>
        <begin position="100"/>
        <end position="105"/>
    </location>
</feature>
<feature type="helix" evidence="5">
    <location>
        <begin position="114"/>
        <end position="128"/>
    </location>
</feature>
<feature type="strand" evidence="5">
    <location>
        <begin position="132"/>
        <end position="136"/>
    </location>
</feature>
<feature type="helix" evidence="5">
    <location>
        <begin position="138"/>
        <end position="141"/>
    </location>
</feature>
<feature type="helix" evidence="5">
    <location>
        <begin position="147"/>
        <end position="154"/>
    </location>
</feature>
<feature type="strand" evidence="5">
    <location>
        <begin position="159"/>
        <end position="164"/>
    </location>
</feature>
<feature type="helix" evidence="5">
    <location>
        <begin position="169"/>
        <end position="176"/>
    </location>
</feature>
<feature type="turn" evidence="5">
    <location>
        <begin position="181"/>
        <end position="183"/>
    </location>
</feature>
<feature type="strand" evidence="5">
    <location>
        <begin position="184"/>
        <end position="189"/>
    </location>
</feature>
<feature type="helix" evidence="5">
    <location>
        <begin position="191"/>
        <end position="193"/>
    </location>
</feature>
<feature type="helix" evidence="5">
    <location>
        <begin position="194"/>
        <end position="199"/>
    </location>
</feature>
<feature type="strand" evidence="5">
    <location>
        <begin position="204"/>
        <end position="208"/>
    </location>
</feature>
<feature type="helix" evidence="5">
    <location>
        <begin position="209"/>
        <end position="211"/>
    </location>
</feature>
<feature type="helix" evidence="5">
    <location>
        <begin position="214"/>
        <end position="225"/>
    </location>
</feature>
<feature type="turn" evidence="5">
    <location>
        <begin position="231"/>
        <end position="234"/>
    </location>
</feature>
<feature type="helix" evidence="5">
    <location>
        <begin position="235"/>
        <end position="244"/>
    </location>
</feature>
<feature type="turn" evidence="5">
    <location>
        <begin position="249"/>
        <end position="252"/>
    </location>
</feature>
<feature type="helix" evidence="5">
    <location>
        <begin position="253"/>
        <end position="259"/>
    </location>
</feature>
<feature type="strand" evidence="5">
    <location>
        <begin position="262"/>
        <end position="265"/>
    </location>
</feature>
<feature type="helix" evidence="5">
    <location>
        <begin position="276"/>
        <end position="290"/>
    </location>
</feature>
<evidence type="ECO:0000255" key="1">
    <source>
        <dbReference type="HAMAP-Rule" id="MF_00418"/>
    </source>
</evidence>
<evidence type="ECO:0000269" key="2">
    <source>
    </source>
</evidence>
<evidence type="ECO:0000305" key="3"/>
<evidence type="ECO:0000305" key="4">
    <source>
    </source>
</evidence>
<evidence type="ECO:0007829" key="5">
    <source>
        <dbReference type="PDB" id="3DI1"/>
    </source>
</evidence>
<name>DAPA_STAAC</name>
<comment type="function">
    <text evidence="4">Catalyzes the condensation of (S)-aspartate-beta-semialdehyde [(S)-ASA] and pyruvate to 4-hydroxy-tetrahydrodipicolinate (HTPA).</text>
</comment>
<comment type="catalytic activity">
    <reaction evidence="1">
        <text>L-aspartate 4-semialdehyde + pyruvate = (2S,4S)-4-hydroxy-2,3,4,5-tetrahydrodipicolinate + H2O + H(+)</text>
        <dbReference type="Rhea" id="RHEA:34171"/>
        <dbReference type="ChEBI" id="CHEBI:15361"/>
        <dbReference type="ChEBI" id="CHEBI:15377"/>
        <dbReference type="ChEBI" id="CHEBI:15378"/>
        <dbReference type="ChEBI" id="CHEBI:67139"/>
        <dbReference type="ChEBI" id="CHEBI:537519"/>
        <dbReference type="EC" id="4.3.3.7"/>
    </reaction>
</comment>
<comment type="activity regulation">
    <text evidence="2">Is not feedback inhibited by lysine.</text>
</comment>
<comment type="biophysicochemical properties">
    <kinetics>
        <KM evidence="2">0.12 mM for pyruvate</KM>
        <KM evidence="2">0.33 mM for L-aspartate-4-semialdehyde</KM>
        <Vmax evidence="2">5.3 umol/sec/mg enzyme</Vmax>
    </kinetics>
</comment>
<comment type="pathway">
    <text evidence="1">Amino-acid biosynthesis; L-lysine biosynthesis via DAP pathway; (S)-tetrahydrodipicolinate from L-aspartate: step 3/4.</text>
</comment>
<comment type="subunit">
    <text evidence="1 2">Homodimer.</text>
</comment>
<comment type="subcellular location">
    <subcellularLocation>
        <location evidence="1">Cytoplasm</location>
    </subcellularLocation>
</comment>
<comment type="similarity">
    <text evidence="1">Belongs to the DapA family.</text>
</comment>
<comment type="caution">
    <text evidence="3">Was originally thought to be a dihydrodipicolinate synthase (DHDPS), catalyzing the condensation of (S)-aspartate-beta-semialdehyde [(S)-ASA] and pyruvate to dihydrodipicolinate (DHDP). However, it was shown in E.coli that the product of the enzymatic reaction is not dihydrodipicolinate but in fact (4S)-4-hydroxy-2,3,4,5-tetrahydro-(2S)-dipicolinic acid (HTPA), and that the consecutive dehydration reaction leading to DHDP is not spontaneous but catalyzed by DapB.</text>
</comment>
<keyword id="KW-0002">3D-structure</keyword>
<keyword id="KW-0028">Amino-acid biosynthesis</keyword>
<keyword id="KW-0963">Cytoplasm</keyword>
<keyword id="KW-0220">Diaminopimelate biosynthesis</keyword>
<keyword id="KW-0456">Lyase</keyword>
<keyword id="KW-0457">Lysine biosynthesis</keyword>
<keyword id="KW-0704">Schiff base</keyword>
<sequence>MTHLFEGVGVALTTPFTNNKVNIEALKTHVNFLLENNAQAIIVNGTTAESPTLTTDEKERILKTVIDLVDKRVPVIAGTGTNDTEKSIQASIQAKALGADAIMLITPYYNKTNQRGLVKHFEAIADAVKLPVVLYNVPSRTNMTIEPETVEILSQHPYIVALKDATNDFEYLEEVKKRIDTNSFALYSGNDDNVVEYYQRGGQGVISVIANVIPKEFQALYDAQQSGLDIQDQFKPIGTLLSALSVDINPIPIKALTSYLGFGNYELRLPLVSLEDTDTKVLRETYDTFKAGENE</sequence>
<gene>
    <name evidence="1" type="primary">dapA</name>
    <name type="ordered locus">SACOL1430</name>
</gene>
<reference key="1">
    <citation type="journal article" date="2005" name="J. Bacteriol.">
        <title>Insights on evolution of virulence and resistance from the complete genome analysis of an early methicillin-resistant Staphylococcus aureus strain and a biofilm-producing methicillin-resistant Staphylococcus epidermidis strain.</title>
        <authorList>
            <person name="Gill S.R."/>
            <person name="Fouts D.E."/>
            <person name="Archer G.L."/>
            <person name="Mongodin E.F."/>
            <person name="DeBoy R.T."/>
            <person name="Ravel J."/>
            <person name="Paulsen I.T."/>
            <person name="Kolonay J.F."/>
            <person name="Brinkac L.M."/>
            <person name="Beanan M.J."/>
            <person name="Dodson R.J."/>
            <person name="Daugherty S.C."/>
            <person name="Madupu R."/>
            <person name="Angiuoli S.V."/>
            <person name="Durkin A.S."/>
            <person name="Haft D.H."/>
            <person name="Vamathevan J.J."/>
            <person name="Khouri H."/>
            <person name="Utterback T.R."/>
            <person name="Lee C."/>
            <person name="Dimitrov G."/>
            <person name="Jiang L."/>
            <person name="Qin H."/>
            <person name="Weidman J."/>
            <person name="Tran K."/>
            <person name="Kang K.H."/>
            <person name="Hance I.R."/>
            <person name="Nelson K.E."/>
            <person name="Fraser C.M."/>
        </authorList>
    </citation>
    <scope>NUCLEOTIDE SEQUENCE [LARGE SCALE GENOMIC DNA]</scope>
    <source>
        <strain>COL</strain>
    </source>
</reference>
<reference key="2">
    <citation type="journal article" date="2008" name="FEBS Lett.">
        <title>Structural and functional characterization of Staphylococcus aureus dihydrodipicolinate synthase.</title>
        <authorList>
            <person name="Girish T.S."/>
            <person name="Sharma E."/>
            <person name="Gopal B."/>
        </authorList>
    </citation>
    <scope>X-RAY CRYSTALLOGRAPHY (2.2 ANGSTROMS) OF APOENZYME AND IN COMPLEX WITH PYRUVATE</scope>
    <scope>FUNCTION</scope>
    <scope>KINETIC PARAMETERS</scope>
    <scope>ACTIVITY REGULATION</scope>
    <scope>ACTIVE SITES</scope>
    <scope>SITES</scope>
    <scope>SUBUNIT</scope>
    <source>
        <strain>COL</strain>
    </source>
</reference>
<accession>Q5HG25</accession>
<organism>
    <name type="scientific">Staphylococcus aureus (strain COL)</name>
    <dbReference type="NCBI Taxonomy" id="93062"/>
    <lineage>
        <taxon>Bacteria</taxon>
        <taxon>Bacillati</taxon>
        <taxon>Bacillota</taxon>
        <taxon>Bacilli</taxon>
        <taxon>Bacillales</taxon>
        <taxon>Staphylococcaceae</taxon>
        <taxon>Staphylococcus</taxon>
    </lineage>
</organism>
<protein>
    <recommendedName>
        <fullName evidence="1">4-hydroxy-tetrahydrodipicolinate synthase</fullName>
        <shortName evidence="1">HTPA synthase</shortName>
        <ecNumber evidence="1">4.3.3.7</ecNumber>
    </recommendedName>
</protein>
<dbReference type="EC" id="4.3.3.7" evidence="1"/>
<dbReference type="EMBL" id="CP000046">
    <property type="protein sequence ID" value="AAW38175.1"/>
    <property type="molecule type" value="Genomic_DNA"/>
</dbReference>
<dbReference type="RefSeq" id="WP_000149257.1">
    <property type="nucleotide sequence ID" value="NZ_JBGOFO010000003.1"/>
</dbReference>
<dbReference type="PDB" id="3DI0">
    <property type="method" value="X-ray"/>
    <property type="resolution" value="2.38 A"/>
    <property type="chains" value="A/B=1-295"/>
</dbReference>
<dbReference type="PDB" id="3DI1">
    <property type="method" value="X-ray"/>
    <property type="resolution" value="2.20 A"/>
    <property type="chains" value="A/B=1-295"/>
</dbReference>
<dbReference type="PDBsum" id="3DI0"/>
<dbReference type="PDBsum" id="3DI1"/>
<dbReference type="SMR" id="Q5HG25"/>
<dbReference type="KEGG" id="sac:SACOL1430"/>
<dbReference type="HOGENOM" id="CLU_049343_7_0_9"/>
<dbReference type="BRENDA" id="4.3.3.7">
    <property type="organism ID" value="3352"/>
</dbReference>
<dbReference type="SABIO-RK" id="Q5HG25"/>
<dbReference type="UniPathway" id="UPA00034">
    <property type="reaction ID" value="UER00017"/>
</dbReference>
<dbReference type="EvolutionaryTrace" id="Q5HG25"/>
<dbReference type="Proteomes" id="UP000000530">
    <property type="component" value="Chromosome"/>
</dbReference>
<dbReference type="GO" id="GO:0005829">
    <property type="term" value="C:cytosol"/>
    <property type="evidence" value="ECO:0007669"/>
    <property type="project" value="TreeGrafter"/>
</dbReference>
<dbReference type="GO" id="GO:0008840">
    <property type="term" value="F:4-hydroxy-tetrahydrodipicolinate synthase activity"/>
    <property type="evidence" value="ECO:0007669"/>
    <property type="project" value="UniProtKB-UniRule"/>
</dbReference>
<dbReference type="GO" id="GO:0019877">
    <property type="term" value="P:diaminopimelate biosynthetic process"/>
    <property type="evidence" value="ECO:0007669"/>
    <property type="project" value="UniProtKB-UniRule"/>
</dbReference>
<dbReference type="GO" id="GO:0009089">
    <property type="term" value="P:lysine biosynthetic process via diaminopimelate"/>
    <property type="evidence" value="ECO:0007669"/>
    <property type="project" value="UniProtKB-UniRule"/>
</dbReference>
<dbReference type="CDD" id="cd00950">
    <property type="entry name" value="DHDPS"/>
    <property type="match status" value="1"/>
</dbReference>
<dbReference type="Gene3D" id="3.20.20.70">
    <property type="entry name" value="Aldolase class I"/>
    <property type="match status" value="1"/>
</dbReference>
<dbReference type="HAMAP" id="MF_00418">
    <property type="entry name" value="DapA"/>
    <property type="match status" value="1"/>
</dbReference>
<dbReference type="InterPro" id="IPR013785">
    <property type="entry name" value="Aldolase_TIM"/>
</dbReference>
<dbReference type="InterPro" id="IPR005263">
    <property type="entry name" value="DapA"/>
</dbReference>
<dbReference type="InterPro" id="IPR002220">
    <property type="entry name" value="DapA-like"/>
</dbReference>
<dbReference type="InterPro" id="IPR020625">
    <property type="entry name" value="Schiff_base-form_aldolases_AS"/>
</dbReference>
<dbReference type="NCBIfam" id="TIGR00674">
    <property type="entry name" value="dapA"/>
    <property type="match status" value="1"/>
</dbReference>
<dbReference type="PANTHER" id="PTHR12128:SF66">
    <property type="entry name" value="4-HYDROXY-2-OXOGLUTARATE ALDOLASE, MITOCHONDRIAL"/>
    <property type="match status" value="1"/>
</dbReference>
<dbReference type="PANTHER" id="PTHR12128">
    <property type="entry name" value="DIHYDRODIPICOLINATE SYNTHASE"/>
    <property type="match status" value="1"/>
</dbReference>
<dbReference type="Pfam" id="PF00701">
    <property type="entry name" value="DHDPS"/>
    <property type="match status" value="1"/>
</dbReference>
<dbReference type="PIRSF" id="PIRSF001365">
    <property type="entry name" value="DHDPS"/>
    <property type="match status" value="1"/>
</dbReference>
<dbReference type="PRINTS" id="PR00146">
    <property type="entry name" value="DHPICSNTHASE"/>
</dbReference>
<dbReference type="SMART" id="SM01130">
    <property type="entry name" value="DHDPS"/>
    <property type="match status" value="1"/>
</dbReference>
<dbReference type="SUPFAM" id="SSF51569">
    <property type="entry name" value="Aldolase"/>
    <property type="match status" value="1"/>
</dbReference>
<dbReference type="PROSITE" id="PS00666">
    <property type="entry name" value="DHDPS_2"/>
    <property type="match status" value="1"/>
</dbReference>